<evidence type="ECO:0000255" key="1">
    <source>
        <dbReference type="HAMAP-Rule" id="MF_01549"/>
    </source>
</evidence>
<comment type="similarity">
    <text evidence="1">Belongs to the DsrB family.</text>
</comment>
<feature type="chain" id="PRO_1000146851" description="Protein DsrB">
    <location>
        <begin position="1"/>
        <end position="62"/>
    </location>
</feature>
<proteinExistence type="inferred from homology"/>
<gene>
    <name evidence="1" type="primary">dsrB</name>
    <name type="ordered locus">ECUMN_2244</name>
</gene>
<accession>B7NBU5</accession>
<sequence length="62" mass="6946">MKVNDRVTVKTDGGPRRPGVVLAVEEFSEGTMYLVSLEDYPLGIWFFNEAGHQDGIFVEKAE</sequence>
<organism>
    <name type="scientific">Escherichia coli O17:K52:H18 (strain UMN026 / ExPEC)</name>
    <dbReference type="NCBI Taxonomy" id="585056"/>
    <lineage>
        <taxon>Bacteria</taxon>
        <taxon>Pseudomonadati</taxon>
        <taxon>Pseudomonadota</taxon>
        <taxon>Gammaproteobacteria</taxon>
        <taxon>Enterobacterales</taxon>
        <taxon>Enterobacteriaceae</taxon>
        <taxon>Escherichia</taxon>
    </lineage>
</organism>
<dbReference type="EMBL" id="CU928163">
    <property type="protein sequence ID" value="CAR13435.1"/>
    <property type="molecule type" value="Genomic_DNA"/>
</dbReference>
<dbReference type="RefSeq" id="WP_000867217.1">
    <property type="nucleotide sequence ID" value="NC_011751.1"/>
</dbReference>
<dbReference type="RefSeq" id="YP_002412964.1">
    <property type="nucleotide sequence ID" value="NC_011751.1"/>
</dbReference>
<dbReference type="SMR" id="B7NBU5"/>
<dbReference type="STRING" id="585056.ECUMN_2244"/>
<dbReference type="GeneID" id="93775233"/>
<dbReference type="KEGG" id="eum:ECUMN_2244"/>
<dbReference type="PATRIC" id="fig|585056.7.peg.2432"/>
<dbReference type="HOGENOM" id="CLU_189289_0_0_6"/>
<dbReference type="Proteomes" id="UP000007097">
    <property type="component" value="Chromosome"/>
</dbReference>
<dbReference type="HAMAP" id="MF_01549">
    <property type="entry name" value="DsrB"/>
    <property type="match status" value="1"/>
</dbReference>
<dbReference type="InterPro" id="IPR019717">
    <property type="entry name" value="Dextransucrase_DSRB"/>
</dbReference>
<dbReference type="NCBIfam" id="NF007981">
    <property type="entry name" value="PRK10708.1"/>
    <property type="match status" value="1"/>
</dbReference>
<dbReference type="Pfam" id="PF10781">
    <property type="entry name" value="DSRB"/>
    <property type="match status" value="1"/>
</dbReference>
<reference key="1">
    <citation type="journal article" date="2009" name="PLoS Genet.">
        <title>Organised genome dynamics in the Escherichia coli species results in highly diverse adaptive paths.</title>
        <authorList>
            <person name="Touchon M."/>
            <person name="Hoede C."/>
            <person name="Tenaillon O."/>
            <person name="Barbe V."/>
            <person name="Baeriswyl S."/>
            <person name="Bidet P."/>
            <person name="Bingen E."/>
            <person name="Bonacorsi S."/>
            <person name="Bouchier C."/>
            <person name="Bouvet O."/>
            <person name="Calteau A."/>
            <person name="Chiapello H."/>
            <person name="Clermont O."/>
            <person name="Cruveiller S."/>
            <person name="Danchin A."/>
            <person name="Diard M."/>
            <person name="Dossat C."/>
            <person name="Karoui M.E."/>
            <person name="Frapy E."/>
            <person name="Garry L."/>
            <person name="Ghigo J.M."/>
            <person name="Gilles A.M."/>
            <person name="Johnson J."/>
            <person name="Le Bouguenec C."/>
            <person name="Lescat M."/>
            <person name="Mangenot S."/>
            <person name="Martinez-Jehanne V."/>
            <person name="Matic I."/>
            <person name="Nassif X."/>
            <person name="Oztas S."/>
            <person name="Petit M.A."/>
            <person name="Pichon C."/>
            <person name="Rouy Z."/>
            <person name="Ruf C.S."/>
            <person name="Schneider D."/>
            <person name="Tourret J."/>
            <person name="Vacherie B."/>
            <person name="Vallenet D."/>
            <person name="Medigue C."/>
            <person name="Rocha E.P.C."/>
            <person name="Denamur E."/>
        </authorList>
    </citation>
    <scope>NUCLEOTIDE SEQUENCE [LARGE SCALE GENOMIC DNA]</scope>
    <source>
        <strain>UMN026 / ExPEC</strain>
    </source>
</reference>
<protein>
    <recommendedName>
        <fullName evidence="1">Protein DsrB</fullName>
    </recommendedName>
</protein>
<name>DSRB_ECOLU</name>